<feature type="chain" id="PRO_0000349056" description="Heme A synthase">
    <location>
        <begin position="1"/>
        <end position="359"/>
    </location>
</feature>
<feature type="transmembrane region" description="Helical" evidence="1">
    <location>
        <begin position="8"/>
        <end position="28"/>
    </location>
</feature>
<feature type="transmembrane region" description="Helical" evidence="1">
    <location>
        <begin position="94"/>
        <end position="114"/>
    </location>
</feature>
<feature type="transmembrane region" description="Helical" evidence="1">
    <location>
        <begin position="124"/>
        <end position="144"/>
    </location>
</feature>
<feature type="transmembrane region" description="Helical" evidence="1">
    <location>
        <begin position="159"/>
        <end position="179"/>
    </location>
</feature>
<feature type="transmembrane region" description="Helical" evidence="1">
    <location>
        <begin position="215"/>
        <end position="235"/>
    </location>
</feature>
<feature type="transmembrane region" description="Helical" evidence="1">
    <location>
        <begin position="276"/>
        <end position="296"/>
    </location>
</feature>
<feature type="transmembrane region" description="Helical" evidence="1">
    <location>
        <begin position="303"/>
        <end position="323"/>
    </location>
</feature>
<feature type="transmembrane region" description="Helical" evidence="1">
    <location>
        <begin position="328"/>
        <end position="348"/>
    </location>
</feature>
<feature type="binding site" description="axial binding residue" evidence="1">
    <location>
        <position position="274"/>
    </location>
    <ligand>
        <name>heme</name>
        <dbReference type="ChEBI" id="CHEBI:30413"/>
    </ligand>
    <ligandPart>
        <name>Fe</name>
        <dbReference type="ChEBI" id="CHEBI:18248"/>
    </ligandPart>
</feature>
<feature type="binding site" description="axial binding residue" evidence="1">
    <location>
        <position position="334"/>
    </location>
    <ligand>
        <name>heme</name>
        <dbReference type="ChEBI" id="CHEBI:30413"/>
    </ligand>
    <ligandPart>
        <name>Fe</name>
        <dbReference type="ChEBI" id="CHEBI:18248"/>
    </ligandPart>
</feature>
<gene>
    <name evidence="1" type="primary">ctaA</name>
    <name type="synonym">coxW</name>
    <name type="ordered locus">OTBS_1883</name>
</gene>
<organism>
    <name type="scientific">Orientia tsutsugamushi (strain Boryong)</name>
    <name type="common">Rickettsia tsutsugamushi</name>
    <dbReference type="NCBI Taxonomy" id="357244"/>
    <lineage>
        <taxon>Bacteria</taxon>
        <taxon>Pseudomonadati</taxon>
        <taxon>Pseudomonadota</taxon>
        <taxon>Alphaproteobacteria</taxon>
        <taxon>Rickettsiales</taxon>
        <taxon>Rickettsiaceae</taxon>
        <taxon>Rickettsieae</taxon>
        <taxon>Orientia</taxon>
    </lineage>
</organism>
<reference key="1">
    <citation type="journal article" date="2007" name="Proc. Natl. Acad. Sci. U.S.A.">
        <title>The Orientia tsutsugamushi genome reveals massive proliferation of conjugative type IV secretion system and host-cell interaction genes.</title>
        <authorList>
            <person name="Cho N.-H."/>
            <person name="Kim H.-R."/>
            <person name="Lee J.-H."/>
            <person name="Kim S.-Y."/>
            <person name="Kim J."/>
            <person name="Cha S."/>
            <person name="Kim S.-Y."/>
            <person name="Darby A.C."/>
            <person name="Fuxelius H.-H."/>
            <person name="Yin J."/>
            <person name="Kim J.H."/>
            <person name="Kim J."/>
            <person name="Lee S.J."/>
            <person name="Koh Y.-S."/>
            <person name="Jang W.-J."/>
            <person name="Park K.-H."/>
            <person name="Andersson S.G.E."/>
            <person name="Choi M.-S."/>
            <person name="Kim I.-S."/>
        </authorList>
    </citation>
    <scope>NUCLEOTIDE SEQUENCE [LARGE SCALE GENOMIC DNA]</scope>
    <source>
        <strain>Boryong</strain>
    </source>
</reference>
<dbReference type="EC" id="1.17.99.9" evidence="1"/>
<dbReference type="EMBL" id="AM494475">
    <property type="protein sequence ID" value="CAM80978.1"/>
    <property type="molecule type" value="Genomic_DNA"/>
</dbReference>
<dbReference type="RefSeq" id="WP_011945087.1">
    <property type="nucleotide sequence ID" value="NC_009488.1"/>
</dbReference>
<dbReference type="SMR" id="A5CF77"/>
<dbReference type="KEGG" id="ots:OTBS_1883"/>
<dbReference type="eggNOG" id="COG1612">
    <property type="taxonomic scope" value="Bacteria"/>
</dbReference>
<dbReference type="HOGENOM" id="CLU_017627_0_0_5"/>
<dbReference type="UniPathway" id="UPA00269">
    <property type="reaction ID" value="UER00713"/>
</dbReference>
<dbReference type="Proteomes" id="UP000001565">
    <property type="component" value="Chromosome"/>
</dbReference>
<dbReference type="GO" id="GO:0005886">
    <property type="term" value="C:plasma membrane"/>
    <property type="evidence" value="ECO:0007669"/>
    <property type="project" value="UniProtKB-SubCell"/>
</dbReference>
<dbReference type="GO" id="GO:0046872">
    <property type="term" value="F:metal ion binding"/>
    <property type="evidence" value="ECO:0007669"/>
    <property type="project" value="UniProtKB-KW"/>
</dbReference>
<dbReference type="GO" id="GO:0016653">
    <property type="term" value="F:oxidoreductase activity, acting on NAD(P)H, heme protein as acceptor"/>
    <property type="evidence" value="ECO:0007669"/>
    <property type="project" value="InterPro"/>
</dbReference>
<dbReference type="GO" id="GO:0006784">
    <property type="term" value="P:heme A biosynthetic process"/>
    <property type="evidence" value="ECO:0007669"/>
    <property type="project" value="UniProtKB-UniRule"/>
</dbReference>
<dbReference type="HAMAP" id="MF_01665">
    <property type="entry name" value="HemeA_synth_type2"/>
    <property type="match status" value="1"/>
</dbReference>
<dbReference type="InterPro" id="IPR003780">
    <property type="entry name" value="COX15/CtaA_fam"/>
</dbReference>
<dbReference type="InterPro" id="IPR023754">
    <property type="entry name" value="HemeA_Synthase_type2"/>
</dbReference>
<dbReference type="PANTHER" id="PTHR23289">
    <property type="entry name" value="CYTOCHROME C OXIDASE ASSEMBLY PROTEIN COX15"/>
    <property type="match status" value="1"/>
</dbReference>
<dbReference type="PANTHER" id="PTHR23289:SF2">
    <property type="entry name" value="CYTOCHROME C OXIDASE ASSEMBLY PROTEIN COX15 HOMOLOG"/>
    <property type="match status" value="1"/>
</dbReference>
<dbReference type="Pfam" id="PF02628">
    <property type="entry name" value="COX15-CtaA"/>
    <property type="match status" value="1"/>
</dbReference>
<keyword id="KW-1003">Cell membrane</keyword>
<keyword id="KW-0350">Heme biosynthesis</keyword>
<keyword id="KW-0408">Iron</keyword>
<keyword id="KW-0472">Membrane</keyword>
<keyword id="KW-0479">Metal-binding</keyword>
<keyword id="KW-0560">Oxidoreductase</keyword>
<keyword id="KW-1185">Reference proteome</keyword>
<keyword id="KW-0812">Transmembrane</keyword>
<keyword id="KW-1133">Transmembrane helix</keyword>
<name>CTAA_ORITB</name>
<evidence type="ECO:0000255" key="1">
    <source>
        <dbReference type="HAMAP-Rule" id="MF_01665"/>
    </source>
</evidence>
<comment type="function">
    <text evidence="1">Catalyzes the conversion of heme O to heme A by two successive hydroxylations of the methyl group at C8. The first hydroxylation forms heme I, the second hydroxylation results in an unstable dihydroxymethyl group, which spontaneously dehydrates, resulting in the formyl group of heme A.</text>
</comment>
<comment type="catalytic activity">
    <reaction evidence="1">
        <text>Fe(II)-heme o + 2 A + H2O = Fe(II)-heme a + 2 AH2</text>
        <dbReference type="Rhea" id="RHEA:63388"/>
        <dbReference type="ChEBI" id="CHEBI:13193"/>
        <dbReference type="ChEBI" id="CHEBI:15377"/>
        <dbReference type="ChEBI" id="CHEBI:17499"/>
        <dbReference type="ChEBI" id="CHEBI:60530"/>
        <dbReference type="ChEBI" id="CHEBI:61715"/>
        <dbReference type="EC" id="1.17.99.9"/>
    </reaction>
    <physiologicalReaction direction="left-to-right" evidence="1">
        <dbReference type="Rhea" id="RHEA:63389"/>
    </physiologicalReaction>
</comment>
<comment type="cofactor">
    <cofactor evidence="1">
        <name>heme b</name>
        <dbReference type="ChEBI" id="CHEBI:60344"/>
    </cofactor>
</comment>
<comment type="pathway">
    <text evidence="1">Porphyrin-containing compound metabolism; heme A biosynthesis; heme A from heme O: step 1/1.</text>
</comment>
<comment type="subunit">
    <text evidence="1">Interacts with CtaB.</text>
</comment>
<comment type="subcellular location">
    <subcellularLocation>
        <location evidence="1">Cell membrane</location>
        <topology evidence="1">Multi-pass membrane protein</topology>
    </subcellularLocation>
</comment>
<comment type="similarity">
    <text evidence="1">Belongs to the COX15/CtaA family. Type 2 subfamily.</text>
</comment>
<accession>A5CF77</accession>
<proteinExistence type="inferred from homology"/>
<protein>
    <recommendedName>
        <fullName evidence="1">Heme A synthase</fullName>
        <shortName evidence="1">HAS</shortName>
        <ecNumber evidence="1">1.17.99.9</ecNumber>
    </recommendedName>
    <alternativeName>
        <fullName evidence="1">Cytochrome aa3-controlling protein</fullName>
    </alternativeName>
</protein>
<sequence length="359" mass="40763">MDKPHTQIMSIWLIVSTLLLLLMIVVGGITRLTNAGLSIVEWNPVSGIIPPISSEDWNNEFNKYTASPEFKLINNQITISEFKYIFFIEYIHRLLGRITGIIIIIPFLIFCYLKSLTKLQYYRLLLITCLVVIQGFMGWYMVKSGLKETPYINHCRLAGHLLLAVIIYHQLIAELLIIIQPFKCYTLATSKANNSNSTSINVINLKIKLIIFNKIIIFLLYTQIMFGALVAGLDAGLIYNEFPNMGDSLIPIEILNQSIDFTMFDNQVLMQFIHRWFGILISGLIICYAIWLIILNKHALRGMGMVAACLVLVQVTTGIITLLYHVPILAALTHQVGAILILTTFLFIQNIVTNFELLH</sequence>